<name>GP42_EBVG</name>
<gene>
    <name type="ORF">BZLF2</name>
</gene>
<organism>
    <name type="scientific">Epstein-Barr virus (strain GD1)</name>
    <name type="common">HHV-4</name>
    <name type="synonym">Human gammaherpesvirus 4</name>
    <dbReference type="NCBI Taxonomy" id="10376"/>
    <lineage>
        <taxon>Viruses</taxon>
        <taxon>Duplodnaviria</taxon>
        <taxon>Heunggongvirae</taxon>
        <taxon>Peploviricota</taxon>
        <taxon>Herviviricetes</taxon>
        <taxon>Herpesvirales</taxon>
        <taxon>Orthoherpesviridae</taxon>
        <taxon>Gammaherpesvirinae</taxon>
        <taxon>Lymphocryptovirus</taxon>
        <taxon>Lymphocryptovirus humangamma4</taxon>
    </lineage>
</organism>
<accession>P0C6Z5</accession>
<accession>Q777E6</accession>
<reference key="1">
    <citation type="journal article" date="2005" name="J. Virol.">
        <title>Genomic sequence analysis of Epstein-Barr virus strain GD1 from a nasopharyngeal carcinoma patient.</title>
        <authorList>
            <person name="Zeng M.-S."/>
            <person name="Li D.-J."/>
            <person name="Liu Q.-L."/>
            <person name="Song L.-B."/>
            <person name="Li M.-Z."/>
            <person name="Zhang R.-H."/>
            <person name="Yu X.-J."/>
            <person name="Wang H.-M."/>
            <person name="Ernberg I."/>
            <person name="Zeng Y.-X."/>
        </authorList>
    </citation>
    <scope>NUCLEOTIDE SEQUENCE [LARGE SCALE GENOMIC DNA]</scope>
</reference>
<organismHost>
    <name type="scientific">Homo sapiens</name>
    <name type="common">Human</name>
    <dbReference type="NCBI Taxonomy" id="9606"/>
</organismHost>
<protein>
    <recommendedName>
        <fullName>Glycoprotein 42</fullName>
        <shortName>gp42</shortName>
    </recommendedName>
    <component>
        <recommendedName>
            <fullName>Soluble gp42</fullName>
        </recommendedName>
    </component>
</protein>
<keyword id="KW-0002">3D-structure</keyword>
<keyword id="KW-1015">Disulfide bond</keyword>
<keyword id="KW-0945">Host-virus interaction</keyword>
<keyword id="KW-0430">Lectin</keyword>
<keyword id="KW-0472">Membrane</keyword>
<keyword id="KW-0812">Transmembrane</keyword>
<keyword id="KW-1133">Transmembrane helix</keyword>
<keyword id="KW-0946">Virion</keyword>
<feature type="chain" id="PRO_0000375941" description="Glycoprotein 42">
    <location>
        <begin position="1"/>
        <end position="223"/>
    </location>
</feature>
<feature type="chain" id="PRO_0000433227" description="Soluble gp42">
    <location>
        <begin position="34"/>
        <end position="223"/>
    </location>
</feature>
<feature type="topological domain" description="Intravirion" evidence="2">
    <location>
        <begin position="1"/>
        <end position="8"/>
    </location>
</feature>
<feature type="transmembrane region" description="Helical" evidence="2">
    <location>
        <begin position="9"/>
        <end position="29"/>
    </location>
</feature>
<feature type="topological domain" description="Virion surface" evidence="2">
    <location>
        <begin position="30"/>
        <end position="223"/>
    </location>
</feature>
<feature type="domain" description="C-type lectin">
    <location>
        <begin position="111"/>
        <end position="217"/>
    </location>
</feature>
<feature type="site" description="Potential cleavage" evidence="3">
    <location>
        <begin position="33"/>
        <end position="34"/>
    </location>
</feature>
<feature type="disulfide bond" evidence="1">
    <location>
        <begin position="99"/>
        <end position="138"/>
    </location>
</feature>
<feature type="disulfide bond" evidence="1">
    <location>
        <begin position="102"/>
        <end position="115"/>
    </location>
</feature>
<feature type="disulfide bond" evidence="1">
    <location>
        <begin position="128"/>
        <end position="214"/>
    </location>
</feature>
<feature type="disulfide bond" evidence="1">
    <location>
        <begin position="132"/>
        <end position="216"/>
    </location>
</feature>
<feature type="disulfide bond" evidence="1">
    <location>
        <begin position="192"/>
        <end position="208"/>
    </location>
</feature>
<feature type="helix" evidence="4">
    <location>
        <begin position="67"/>
        <end position="70"/>
    </location>
</feature>
<feature type="strand" evidence="4">
    <location>
        <begin position="92"/>
        <end position="94"/>
    </location>
</feature>
<feature type="strand" evidence="4">
    <location>
        <begin position="104"/>
        <end position="106"/>
    </location>
</feature>
<feature type="strand" evidence="4">
    <location>
        <begin position="108"/>
        <end position="111"/>
    </location>
</feature>
<feature type="strand" evidence="4">
    <location>
        <begin position="114"/>
        <end position="118"/>
    </location>
</feature>
<feature type="strand" evidence="5">
    <location>
        <begin position="125"/>
        <end position="127"/>
    </location>
</feature>
<feature type="helix" evidence="4">
    <location>
        <begin position="128"/>
        <end position="133"/>
    </location>
</feature>
<feature type="strand" evidence="4">
    <location>
        <begin position="136"/>
        <end position="138"/>
    </location>
</feature>
<feature type="turn" evidence="4">
    <location>
        <begin position="146"/>
        <end position="148"/>
    </location>
</feature>
<feature type="helix" evidence="4">
    <location>
        <begin position="149"/>
        <end position="154"/>
    </location>
</feature>
<feature type="strand" evidence="4">
    <location>
        <begin position="169"/>
        <end position="172"/>
    </location>
</feature>
<feature type="strand" evidence="5">
    <location>
        <begin position="176"/>
        <end position="178"/>
    </location>
</feature>
<feature type="strand" evidence="4">
    <location>
        <begin position="193"/>
        <end position="195"/>
    </location>
</feature>
<feature type="strand" evidence="5">
    <location>
        <begin position="208"/>
        <end position="210"/>
    </location>
</feature>
<feature type="strand" evidence="4">
    <location>
        <begin position="214"/>
        <end position="218"/>
    </location>
</feature>
<dbReference type="EMBL" id="AY961628">
    <property type="protein sequence ID" value="AAY41121.1"/>
    <property type="molecule type" value="Genomic_DNA"/>
</dbReference>
<dbReference type="RefSeq" id="YP_401672.1">
    <property type="nucleotide sequence ID" value="NC_007605.1"/>
</dbReference>
<dbReference type="PDB" id="5T1D">
    <property type="method" value="X-ray"/>
    <property type="resolution" value="3.10 A"/>
    <property type="chains" value="C=33-223"/>
</dbReference>
<dbReference type="PDB" id="6C5V">
    <property type="method" value="EM"/>
    <property type="resolution" value="4.80 A"/>
    <property type="chains" value="C=33-223"/>
</dbReference>
<dbReference type="PDB" id="7S07">
    <property type="method" value="X-ray"/>
    <property type="resolution" value="3.29 A"/>
    <property type="chains" value="C=47-79"/>
</dbReference>
<dbReference type="PDB" id="7S1B">
    <property type="method" value="X-ray"/>
    <property type="resolution" value="3.03 A"/>
    <property type="chains" value="C=47-79"/>
</dbReference>
<dbReference type="PDB" id="7YOY">
    <property type="method" value="EM"/>
    <property type="resolution" value="3.64 A"/>
    <property type="chains" value="C=88-223"/>
</dbReference>
<dbReference type="PDB" id="8KHR">
    <property type="method" value="EM"/>
    <property type="resolution" value="3.25 A"/>
    <property type="chains" value="C=34-223"/>
</dbReference>
<dbReference type="PDBsum" id="5T1D"/>
<dbReference type="PDBsum" id="6C5V"/>
<dbReference type="PDBsum" id="7S07"/>
<dbReference type="PDBsum" id="7S1B"/>
<dbReference type="PDBsum" id="7YOY"/>
<dbReference type="PDBsum" id="8KHR"/>
<dbReference type="EMDB" id="EMD-33990"/>
<dbReference type="EMDB" id="EMD-37249"/>
<dbReference type="EMDB" id="EMD-7344"/>
<dbReference type="SMR" id="P0C6Z5"/>
<dbReference type="BioGRID" id="971787">
    <property type="interactions" value="1"/>
</dbReference>
<dbReference type="IntAct" id="P0C6Z5">
    <property type="interactions" value="3"/>
</dbReference>
<dbReference type="MINT" id="P0C6Z5"/>
<dbReference type="DNASU" id="3783745"/>
<dbReference type="GeneID" id="3783745"/>
<dbReference type="KEGG" id="vg:3783745"/>
<dbReference type="Proteomes" id="UP000007641">
    <property type="component" value="Genome"/>
</dbReference>
<dbReference type="GO" id="GO:0016020">
    <property type="term" value="C:membrane"/>
    <property type="evidence" value="ECO:0007669"/>
    <property type="project" value="UniProtKB-KW"/>
</dbReference>
<dbReference type="GO" id="GO:0055036">
    <property type="term" value="C:virion membrane"/>
    <property type="evidence" value="ECO:0007669"/>
    <property type="project" value="UniProtKB-SubCell"/>
</dbReference>
<dbReference type="GO" id="GO:0030246">
    <property type="term" value="F:carbohydrate binding"/>
    <property type="evidence" value="ECO:0007669"/>
    <property type="project" value="UniProtKB-KW"/>
</dbReference>
<dbReference type="Gene3D" id="3.10.100.10">
    <property type="entry name" value="Mannose-Binding Protein A, subunit A"/>
    <property type="match status" value="1"/>
</dbReference>
<dbReference type="InterPro" id="IPR016186">
    <property type="entry name" value="C-type_lectin-like/link_sf"/>
</dbReference>
<dbReference type="InterPro" id="IPR016187">
    <property type="entry name" value="CTDL_fold"/>
</dbReference>
<dbReference type="SUPFAM" id="SSF56436">
    <property type="entry name" value="C-type lectin-like"/>
    <property type="match status" value="1"/>
</dbReference>
<proteinExistence type="evidence at protein level"/>
<comment type="function">
    <text evidence="1">Plays a role in virion attachment to host B-lymphocytes, through binding to leukocyte antigen (HLA) class II and subsequently participates in fusion of the virion with host membranes. May act as a tropism switch that directs fusion with B-lymphocytes and inhibits fusion with epithelial cells (By similarity).</text>
</comment>
<comment type="subunit">
    <text evidence="1">Forms a complex with gp25 and gp85 via its N-terminus; this complex is used for invasion of B-lymphocytes.</text>
</comment>
<comment type="interaction">
    <interactant intactId="EBI-2621381">
        <id>P0C6Z5</id>
    </interactant>
    <interactant intactId="EBI-2621388">
        <id>P0C734</id>
        <label>BTRF1</label>
    </interactant>
    <organismsDiffer>false</organismsDiffer>
    <experiments>2</experiments>
</comment>
<comment type="subcellular location">
    <subcellularLocation>
        <location>Virion membrane</location>
    </subcellularLocation>
    <text evidence="1">virions synthesized in B-lymphocytes contain a lower amount of gp42 due to sequestration by cellular HLA class II protein, whereas virions made from epithelial cells has a higher amount of gp42. Membrane; Single-pass membrane protein (By similarity).</text>
</comment>
<comment type="domain">
    <text>The C-lectin type domain is essential for virion-induced membrane fusion.</text>
</comment>
<comment type="similarity">
    <text evidence="3">Belongs to the epstein barr virus gp42 family.</text>
</comment>
<sequence length="223" mass="25257">MVSFKQVRVPLFTAIALVIVLLLAYFLPPRVRGGGRVAAAAITWVPKPNVEVWPVDPPPPVNFNKTAEQEYGDKEVKLPHWTPTLHTFQVPQNYTKANCTYCNTREYTFSYKGCCFYFTKKKHTWNGCFQACAELYPCTYFYGPTPDILPVVTRNLNAIESLWVGVYRVGEGNWTSLDGGTFKVYQIFGSHCTYVSKFSTVPVSHHECSFLKPCLCVSQRSNS</sequence>
<evidence type="ECO:0000250" key="1"/>
<evidence type="ECO:0000255" key="2"/>
<evidence type="ECO:0000305" key="3"/>
<evidence type="ECO:0007829" key="4">
    <source>
        <dbReference type="PDB" id="5T1D"/>
    </source>
</evidence>
<evidence type="ECO:0007829" key="5">
    <source>
        <dbReference type="PDB" id="8KHR"/>
    </source>
</evidence>